<proteinExistence type="inferred from homology"/>
<organismHost>
    <name type="scientific">Oryctolagus cuniculus</name>
    <name type="common">Rabbit</name>
    <dbReference type="NCBI Taxonomy" id="9986"/>
</organismHost>
<name>NPH2_MYXVL</name>
<accession>Q9Q8Q2</accession>
<sequence length="678" mass="77789">MENHLPNIFYFPNCVTAFPYRYTQKELDDMKPVDRERFKYAVFPLIKHRWCRAYVVRDNHTFKLNVETSKRLRRVAYPTLVPLVGVNAALREYVMEDGTKISFECYSYLICKRTTSLHDVDDSTIRGLVEGGNQLNIFTNSVGSVTNTVGIFGNPNPFAKVPLKSLHPSMQCKIFTSWARRVPVVLTGDTGVGKTSQVPKLLLWFNYLFGGFTDLSTLTFEVQEKPIVLSLPRVALVKLHSETLLTSLGFEEIHGSPVSLKFGNMQERFVNTRFSRYGIVFSTHKITLNTLFKYSTVILDEVHEHDQTGDIIIAVCRKYIRKLDSLFLMTATLEDDRRRIEEFFAESVFVHIPGGTLFSISEAYVKNSNDPLNRFMYIEEEKRNLANAIKTYTPPKQSSGIVFVSTVSQCEAYKQYLSERLPYKFYIIHGKVQNINDVLSDIYDNDGVSIIISTPYLESSVTVRNATHVYDTGRVYIPSPYGGCESFISKSMRDQRKGRVGRVNPGMYVYFYNVSELRPIKRIDFEFLHNYVLYAKVFDLQLPEDLFVKPTNVTRLHDVIEYIRSFDISDDVWTRLLSSYYIHILEYAKVYARGGSGALALDSFERTGNLTDDALDAIKSLNMRAKILSHKKASAHTYALRCKLLFGVYAGKVFTVYHKRPLTGYITMIAEHSFIPDY</sequence>
<protein>
    <recommendedName>
        <fullName>RNA helicase NPH-II</fullName>
        <ecNumber>3.6.4.13</ecNumber>
    </recommendedName>
    <alternativeName>
        <fullName>Nucleoside triphosphatase II</fullName>
        <shortName>NTPase II</shortName>
    </alternativeName>
    <alternativeName>
        <fullName>Nucleoside triphosphate phosphohydrolase II</fullName>
        <shortName>NPH II</shortName>
    </alternativeName>
    <alternativeName>
        <fullName>RNA helicase m44R</fullName>
    </alternativeName>
</protein>
<dbReference type="EC" id="3.6.4.13"/>
<dbReference type="EMBL" id="AF170726">
    <property type="protein sequence ID" value="AAF14932.1"/>
    <property type="molecule type" value="Genomic_DNA"/>
</dbReference>
<dbReference type="RefSeq" id="NP_051758.1">
    <property type="nucleotide sequence ID" value="NC_001132.2"/>
</dbReference>
<dbReference type="SMR" id="Q9Q8Q2"/>
<dbReference type="GeneID" id="932096"/>
<dbReference type="KEGG" id="vg:932096"/>
<dbReference type="Proteomes" id="UP000000867">
    <property type="component" value="Segment"/>
</dbReference>
<dbReference type="GO" id="GO:0044423">
    <property type="term" value="C:virion component"/>
    <property type="evidence" value="ECO:0007669"/>
    <property type="project" value="UniProtKB-KW"/>
</dbReference>
<dbReference type="GO" id="GO:0005524">
    <property type="term" value="F:ATP binding"/>
    <property type="evidence" value="ECO:0007669"/>
    <property type="project" value="UniProtKB-KW"/>
</dbReference>
<dbReference type="GO" id="GO:0016887">
    <property type="term" value="F:ATP hydrolysis activity"/>
    <property type="evidence" value="ECO:0007669"/>
    <property type="project" value="RHEA"/>
</dbReference>
<dbReference type="GO" id="GO:0003723">
    <property type="term" value="F:RNA binding"/>
    <property type="evidence" value="ECO:0007669"/>
    <property type="project" value="TreeGrafter"/>
</dbReference>
<dbReference type="GO" id="GO:0003724">
    <property type="term" value="F:RNA helicase activity"/>
    <property type="evidence" value="ECO:0007669"/>
    <property type="project" value="UniProtKB-EC"/>
</dbReference>
<dbReference type="Gene3D" id="3.40.50.300">
    <property type="entry name" value="P-loop containing nucleotide triphosphate hydrolases"/>
    <property type="match status" value="2"/>
</dbReference>
<dbReference type="InterPro" id="IPR011545">
    <property type="entry name" value="DEAD/DEAH_box_helicase_dom"/>
</dbReference>
<dbReference type="InterPro" id="IPR002464">
    <property type="entry name" value="DNA/RNA_helicase_DEAH_CS"/>
</dbReference>
<dbReference type="InterPro" id="IPR014001">
    <property type="entry name" value="Helicase_ATP-bd"/>
</dbReference>
<dbReference type="InterPro" id="IPR001650">
    <property type="entry name" value="Helicase_C-like"/>
</dbReference>
<dbReference type="InterPro" id="IPR021892">
    <property type="entry name" value="NPH-II"/>
</dbReference>
<dbReference type="InterPro" id="IPR027417">
    <property type="entry name" value="P-loop_NTPase"/>
</dbReference>
<dbReference type="PANTHER" id="PTHR18934">
    <property type="entry name" value="ATP-DEPENDENT RNA HELICASE"/>
    <property type="match status" value="1"/>
</dbReference>
<dbReference type="PANTHER" id="PTHR18934:SF221">
    <property type="entry name" value="ATP-DEPENDENT RNA HELICASE DHX34-RELATED"/>
    <property type="match status" value="1"/>
</dbReference>
<dbReference type="Pfam" id="PF00270">
    <property type="entry name" value="DEAD"/>
    <property type="match status" value="1"/>
</dbReference>
<dbReference type="Pfam" id="PF00271">
    <property type="entry name" value="Helicase_C"/>
    <property type="match status" value="1"/>
</dbReference>
<dbReference type="Pfam" id="PF12011">
    <property type="entry name" value="NPH-II"/>
    <property type="match status" value="1"/>
</dbReference>
<dbReference type="SMART" id="SM00487">
    <property type="entry name" value="DEXDc"/>
    <property type="match status" value="1"/>
</dbReference>
<dbReference type="SMART" id="SM00490">
    <property type="entry name" value="HELICc"/>
    <property type="match status" value="1"/>
</dbReference>
<dbReference type="SUPFAM" id="SSF52540">
    <property type="entry name" value="P-loop containing nucleoside triphosphate hydrolases"/>
    <property type="match status" value="1"/>
</dbReference>
<dbReference type="PROSITE" id="PS00690">
    <property type="entry name" value="DEAH_ATP_HELICASE"/>
    <property type="match status" value="1"/>
</dbReference>
<dbReference type="PROSITE" id="PS51192">
    <property type="entry name" value="HELICASE_ATP_BIND_1"/>
    <property type="match status" value="1"/>
</dbReference>
<dbReference type="PROSITE" id="PS51194">
    <property type="entry name" value="HELICASE_CTER"/>
    <property type="match status" value="1"/>
</dbReference>
<feature type="chain" id="PRO_0000055190" description="RNA helicase NPH-II">
    <location>
        <begin position="1"/>
        <end position="678"/>
    </location>
</feature>
<feature type="domain" description="Helicase ATP-binding" evidence="2">
    <location>
        <begin position="175"/>
        <end position="351"/>
    </location>
</feature>
<feature type="domain" description="Helicase C-terminal" evidence="3">
    <location>
        <begin position="371"/>
        <end position="546"/>
    </location>
</feature>
<feature type="short sequence motif" description="DEXH box">
    <location>
        <begin position="300"/>
        <end position="303"/>
    </location>
</feature>
<feature type="binding site" evidence="2">
    <location>
        <begin position="188"/>
        <end position="195"/>
    </location>
    <ligand>
        <name>ATP</name>
        <dbReference type="ChEBI" id="CHEBI:30616"/>
    </ligand>
</feature>
<gene>
    <name type="primary">OPG084</name>
    <name type="synonym">NPH2</name>
    <name type="ordered locus">m044R</name>
</gene>
<organism>
    <name type="scientific">Myxoma virus (strain Lausanne)</name>
    <name type="common">MYXV</name>
    <dbReference type="NCBI Taxonomy" id="31530"/>
    <lineage>
        <taxon>Viruses</taxon>
        <taxon>Varidnaviria</taxon>
        <taxon>Bamfordvirae</taxon>
        <taxon>Nucleocytoviricota</taxon>
        <taxon>Pokkesviricetes</taxon>
        <taxon>Chitovirales</taxon>
        <taxon>Poxviridae</taxon>
        <taxon>Chordopoxvirinae</taxon>
        <taxon>Leporipoxvirus</taxon>
        <taxon>Myxoma virus</taxon>
    </lineage>
</organism>
<reference key="1">
    <citation type="journal article" date="1999" name="Virology">
        <title>The complete DNA sequence of myxoma virus.</title>
        <authorList>
            <person name="Cameron C."/>
            <person name="Hota-Mitchell S."/>
            <person name="Chen L."/>
            <person name="Barrett J.W."/>
            <person name="Cao J.-X."/>
            <person name="Macaulay C."/>
            <person name="Willer D.O."/>
            <person name="Evans D.H."/>
            <person name="McFadden G."/>
        </authorList>
    </citation>
    <scope>NUCLEOTIDE SEQUENCE [LARGE SCALE GENOMIC DNA]</scope>
</reference>
<evidence type="ECO:0000250" key="1">
    <source>
        <dbReference type="UniProtKB" id="P12927"/>
    </source>
</evidence>
<evidence type="ECO:0000255" key="2">
    <source>
        <dbReference type="PROSITE-ProRule" id="PRU00541"/>
    </source>
</evidence>
<evidence type="ECO:0000255" key="3">
    <source>
        <dbReference type="PROSITE-ProRule" id="PRU00542"/>
    </source>
</evidence>
<evidence type="ECO:0000305" key="4"/>
<keyword id="KW-0067">ATP-binding</keyword>
<keyword id="KW-0347">Helicase</keyword>
<keyword id="KW-0378">Hydrolase</keyword>
<keyword id="KW-0547">Nucleotide-binding</keyword>
<keyword id="KW-1185">Reference proteome</keyword>
<keyword id="KW-0804">Transcription</keyword>
<keyword id="KW-0946">Virion</keyword>
<comment type="function">
    <text evidence="1">NTP-dependent helicase that catalyzes unidirectional unwinding of 3'tailed duplex RNAs and plays an important role during transcription of early mRNAs, presumably by preventing R-loop formation behind the elongating RNA polymerase. Might also play a role in the export of newly synthesized mRNA chains out of the core into the cytoplasm. Required for replication and propagation of viral particles.</text>
</comment>
<comment type="catalytic activity">
    <reaction evidence="1">
        <text>ATP + H2O = ADP + phosphate + H(+)</text>
        <dbReference type="Rhea" id="RHEA:13065"/>
        <dbReference type="ChEBI" id="CHEBI:15377"/>
        <dbReference type="ChEBI" id="CHEBI:15378"/>
        <dbReference type="ChEBI" id="CHEBI:30616"/>
        <dbReference type="ChEBI" id="CHEBI:43474"/>
        <dbReference type="ChEBI" id="CHEBI:456216"/>
        <dbReference type="EC" id="3.6.4.13"/>
    </reaction>
</comment>
<comment type="subunit">
    <text evidence="1">Monomer.</text>
</comment>
<comment type="subcellular location">
    <subcellularLocation>
        <location evidence="1">Virion</location>
    </subcellularLocation>
    <text evidence="1">Localizes to the virion core.</text>
</comment>
<comment type="similarity">
    <text evidence="4">Belongs to the DEAD box helicase family. DEAH subfamily.</text>
</comment>